<reference key="1">
    <citation type="submission" date="2007-03" db="EMBL/GenBank/DDBJ databases">
        <title>Complete sequence of Prosthecochloris vibrioformis DSM 265.</title>
        <authorList>
            <consortium name="US DOE Joint Genome Institute"/>
            <person name="Copeland A."/>
            <person name="Lucas S."/>
            <person name="Lapidus A."/>
            <person name="Barry K."/>
            <person name="Detter J.C."/>
            <person name="Glavina del Rio T."/>
            <person name="Hammon N."/>
            <person name="Israni S."/>
            <person name="Pitluck S."/>
            <person name="Schmutz J."/>
            <person name="Larimer F."/>
            <person name="Land M."/>
            <person name="Hauser L."/>
            <person name="Mikhailova N."/>
            <person name="Li T."/>
            <person name="Overmann J."/>
            <person name="Schuster S.C."/>
            <person name="Bryant D.A."/>
            <person name="Richardson P."/>
        </authorList>
    </citation>
    <scope>NUCLEOTIDE SEQUENCE [LARGE SCALE GENOMIC DNA]</scope>
    <source>
        <strain>DSM 265 / 1930</strain>
    </source>
</reference>
<name>Y403_CHLPM</name>
<comment type="similarity">
    <text evidence="1">Belongs to the UPF0235 family.</text>
</comment>
<gene>
    <name type="ordered locus">Cvib_0403</name>
</gene>
<evidence type="ECO:0000255" key="1">
    <source>
        <dbReference type="HAMAP-Rule" id="MF_00634"/>
    </source>
</evidence>
<proteinExistence type="inferred from homology"/>
<feature type="chain" id="PRO_1000082645" description="UPF0235 protein Cvib_0403">
    <location>
        <begin position="1"/>
        <end position="100"/>
    </location>
</feature>
<accession>A4SD66</accession>
<organism>
    <name type="scientific">Chlorobium phaeovibrioides (strain DSM 265 / 1930)</name>
    <name type="common">Prosthecochloris vibrioformis (strain DSM 265)</name>
    <dbReference type="NCBI Taxonomy" id="290318"/>
    <lineage>
        <taxon>Bacteria</taxon>
        <taxon>Pseudomonadati</taxon>
        <taxon>Chlorobiota</taxon>
        <taxon>Chlorobiia</taxon>
        <taxon>Chlorobiales</taxon>
        <taxon>Chlorobiaceae</taxon>
        <taxon>Chlorobium/Pelodictyon group</taxon>
        <taxon>Chlorobium</taxon>
    </lineage>
</organism>
<dbReference type="EMBL" id="CP000607">
    <property type="protein sequence ID" value="ABP36425.1"/>
    <property type="molecule type" value="Genomic_DNA"/>
</dbReference>
<dbReference type="SMR" id="A4SD66"/>
<dbReference type="STRING" id="290318.Cvib_0403"/>
<dbReference type="KEGG" id="pvi:Cvib_0403"/>
<dbReference type="eggNOG" id="COG1872">
    <property type="taxonomic scope" value="Bacteria"/>
</dbReference>
<dbReference type="HOGENOM" id="CLU_130694_6_0_10"/>
<dbReference type="OrthoDB" id="9800587at2"/>
<dbReference type="GO" id="GO:0005737">
    <property type="term" value="C:cytoplasm"/>
    <property type="evidence" value="ECO:0007669"/>
    <property type="project" value="TreeGrafter"/>
</dbReference>
<dbReference type="Gene3D" id="3.30.1200.10">
    <property type="entry name" value="YggU-like"/>
    <property type="match status" value="1"/>
</dbReference>
<dbReference type="HAMAP" id="MF_00634">
    <property type="entry name" value="UPF0235"/>
    <property type="match status" value="1"/>
</dbReference>
<dbReference type="InterPro" id="IPR003746">
    <property type="entry name" value="DUF167"/>
</dbReference>
<dbReference type="InterPro" id="IPR036591">
    <property type="entry name" value="YggU-like_sf"/>
</dbReference>
<dbReference type="NCBIfam" id="TIGR00251">
    <property type="entry name" value="DUF167 family protein"/>
    <property type="match status" value="1"/>
</dbReference>
<dbReference type="PANTHER" id="PTHR13420">
    <property type="entry name" value="UPF0235 PROTEIN C15ORF40"/>
    <property type="match status" value="1"/>
</dbReference>
<dbReference type="PANTHER" id="PTHR13420:SF7">
    <property type="entry name" value="UPF0235 PROTEIN C15ORF40"/>
    <property type="match status" value="1"/>
</dbReference>
<dbReference type="Pfam" id="PF02594">
    <property type="entry name" value="DUF167"/>
    <property type="match status" value="1"/>
</dbReference>
<dbReference type="SMART" id="SM01152">
    <property type="entry name" value="DUF167"/>
    <property type="match status" value="1"/>
</dbReference>
<dbReference type="SUPFAM" id="SSF69786">
    <property type="entry name" value="YggU-like"/>
    <property type="match status" value="1"/>
</dbReference>
<protein>
    <recommendedName>
        <fullName evidence="1">UPF0235 protein Cvib_0403</fullName>
    </recommendedName>
</protein>
<sequence>MRVVAVREKKGNALFSVRVQPRASKTAVSGPYAGGLKITLKAAPVDDAANRECCRLFAGMFGIADGRVHVVSGRSSRSKSVMLEGVSSREAEEAFERFGL</sequence>